<proteinExistence type="evidence at protein level"/>
<name>TTLL3_HUMAN</name>
<evidence type="ECO:0000250" key="1">
    <source>
        <dbReference type="UniProtKB" id="A4Q9E5"/>
    </source>
</evidence>
<evidence type="ECO:0000250" key="2">
    <source>
        <dbReference type="UniProtKB" id="A4Q9E8"/>
    </source>
</evidence>
<evidence type="ECO:0000250" key="3">
    <source>
        <dbReference type="UniProtKB" id="B2GUB3"/>
    </source>
</evidence>
<evidence type="ECO:0000255" key="4">
    <source>
        <dbReference type="PROSITE-ProRule" id="PRU00568"/>
    </source>
</evidence>
<evidence type="ECO:0000256" key="5">
    <source>
        <dbReference type="SAM" id="MobiDB-lite"/>
    </source>
</evidence>
<evidence type="ECO:0000269" key="6">
    <source>
    </source>
</evidence>
<evidence type="ECO:0000269" key="7">
    <source>
    </source>
</evidence>
<evidence type="ECO:0000269" key="8">
    <source>
    </source>
</evidence>
<evidence type="ECO:0000269" key="9">
    <source>
    </source>
</evidence>
<evidence type="ECO:0000269" key="10">
    <source>
    </source>
</evidence>
<evidence type="ECO:0000303" key="11">
    <source>
    </source>
</evidence>
<evidence type="ECO:0000303" key="12">
    <source>
    </source>
</evidence>
<evidence type="ECO:0000303" key="13">
    <source ref="5"/>
</evidence>
<evidence type="ECO:0000305" key="14"/>
<evidence type="ECO:0000312" key="15">
    <source>
        <dbReference type="HGNC" id="HGNC:24483"/>
    </source>
</evidence>
<accession>Q9Y4R7</accession>
<accession>Q4KMS8</accession>
<accession>Q6AWA3</accession>
<accession>Q6ZU95</accession>
<accession>Q8NDN8</accession>
<accession>Q96GG8</accession>
<accession>Q9H876</accession>
<accession>Q9UI99</accession>
<keyword id="KW-0025">Alternative splicing</keyword>
<keyword id="KW-0067">ATP-binding</keyword>
<keyword id="KW-0966">Cell projection</keyword>
<keyword id="KW-0969">Cilium</keyword>
<keyword id="KW-0963">Cytoplasm</keyword>
<keyword id="KW-0206">Cytoskeleton</keyword>
<keyword id="KW-0282">Flagellum</keyword>
<keyword id="KW-0436">Ligase</keyword>
<keyword id="KW-0460">Magnesium</keyword>
<keyword id="KW-0479">Metal-binding</keyword>
<keyword id="KW-0493">Microtubule</keyword>
<keyword id="KW-0547">Nucleotide-binding</keyword>
<keyword id="KW-1267">Proteomics identification</keyword>
<keyword id="KW-1185">Reference proteome</keyword>
<protein>
    <recommendedName>
        <fullName evidence="1">Tubulin monoglycylase TTLL3</fullName>
        <ecNumber evidence="1">6.3.2.-</ecNumber>
    </recommendedName>
    <alternativeName>
        <fullName>HOTTL</fullName>
    </alternativeName>
    <alternativeName>
        <fullName>Tubulin--tyrosine ligase-like protein 3</fullName>
    </alternativeName>
</protein>
<dbReference type="EC" id="6.3.2.-" evidence="1"/>
<dbReference type="EMBL" id="AL096725">
    <property type="protein sequence ID" value="CAB46375.1"/>
    <property type="molecule type" value="mRNA"/>
</dbReference>
<dbReference type="EMBL" id="AL833939">
    <property type="protein sequence ID" value="CAD38794.1"/>
    <property type="molecule type" value="mRNA"/>
</dbReference>
<dbReference type="EMBL" id="BX648175">
    <property type="protein sequence ID" value="CAH10554.1"/>
    <property type="molecule type" value="mRNA"/>
</dbReference>
<dbReference type="EMBL" id="AC022382">
    <property type="status" value="NOT_ANNOTATED_CDS"/>
    <property type="molecule type" value="Genomic_DNA"/>
</dbReference>
<dbReference type="EMBL" id="BC098298">
    <property type="protein sequence ID" value="AAH98298.1"/>
    <property type="molecule type" value="mRNA"/>
</dbReference>
<dbReference type="EMBL" id="BC098361">
    <property type="protein sequence ID" value="AAH98361.1"/>
    <property type="molecule type" value="mRNA"/>
</dbReference>
<dbReference type="EMBL" id="BC099735">
    <property type="protein sequence ID" value="AAH99735.1"/>
    <property type="molecule type" value="mRNA"/>
</dbReference>
<dbReference type="EMBL" id="BC105638">
    <property type="protein sequence ID" value="AAI05639.1"/>
    <property type="molecule type" value="mRNA"/>
</dbReference>
<dbReference type="EMBL" id="AK023960">
    <property type="protein sequence ID" value="BAB14741.1"/>
    <property type="molecule type" value="mRNA"/>
</dbReference>
<dbReference type="EMBL" id="AF078842">
    <property type="protein sequence ID" value="AAF23353.1"/>
    <property type="molecule type" value="mRNA"/>
</dbReference>
<dbReference type="CCDS" id="CCDS93200.1">
    <molecule id="Q9Y4R7-1"/>
</dbReference>
<dbReference type="PIR" id="T12515">
    <property type="entry name" value="T12515"/>
</dbReference>
<dbReference type="RefSeq" id="NP_001021100.3">
    <property type="nucleotide sequence ID" value="NM_001025930.3"/>
</dbReference>
<dbReference type="RefSeq" id="NP_001352980.1">
    <molecule id="Q9Y4R7-1"/>
    <property type="nucleotide sequence ID" value="NM_001366051.2"/>
</dbReference>
<dbReference type="SMR" id="Q9Y4R7"/>
<dbReference type="BioGRID" id="117575">
    <property type="interactions" value="15"/>
</dbReference>
<dbReference type="FunCoup" id="Q9Y4R7">
    <property type="interactions" value="132"/>
</dbReference>
<dbReference type="IntAct" id="Q9Y4R7">
    <property type="interactions" value="10"/>
</dbReference>
<dbReference type="STRING" id="9606.ENSP00000392549"/>
<dbReference type="DrugBank" id="DB00277">
    <property type="generic name" value="Theophylline"/>
</dbReference>
<dbReference type="GlyGen" id="Q9Y4R7">
    <property type="glycosylation" value="1 site, 1 O-linked glycan (1 site)"/>
</dbReference>
<dbReference type="iPTMnet" id="Q9Y4R7"/>
<dbReference type="PhosphoSitePlus" id="Q9Y4R7"/>
<dbReference type="SwissPalm" id="Q9Y4R7"/>
<dbReference type="BioMuta" id="TTLL3"/>
<dbReference type="DMDM" id="172046606"/>
<dbReference type="MassIVE" id="Q9Y4R7"/>
<dbReference type="PaxDb" id="9606-ENSP00000392549"/>
<dbReference type="PeptideAtlas" id="Q9Y4R7"/>
<dbReference type="ProteomicsDB" id="86244">
    <molecule id="Q9Y4R7-1"/>
</dbReference>
<dbReference type="TopDownProteomics" id="Q9Y4R7-5">
    <molecule id="Q9Y4R7-5"/>
</dbReference>
<dbReference type="Antibodypedia" id="34894">
    <property type="antibodies" value="34 antibodies from 14 providers"/>
</dbReference>
<dbReference type="DNASU" id="26140"/>
<dbReference type="Ensembl" id="ENST00000383827.5">
    <molecule id="Q9Y4R7-2"/>
    <property type="protein sequence ID" value="ENSP00000373338.1"/>
    <property type="gene ID" value="ENSG00000214021.19"/>
</dbReference>
<dbReference type="Ensembl" id="ENST00000426895.10">
    <molecule id="Q9Y4R7-1"/>
    <property type="protein sequence ID" value="ENSP00000392549.5"/>
    <property type="gene ID" value="ENSG00000214021.19"/>
</dbReference>
<dbReference type="Ensembl" id="ENST00000430793.1">
    <molecule id="Q9Y4R7-5"/>
    <property type="protein sequence ID" value="ENSP00000403874.1"/>
    <property type="gene ID" value="ENSG00000214021.19"/>
</dbReference>
<dbReference type="Ensembl" id="ENST00000438141.5">
    <molecule id="Q9Y4R7-2"/>
    <property type="protein sequence ID" value="ENSP00000409246.1"/>
    <property type="gene ID" value="ENSG00000214021.19"/>
</dbReference>
<dbReference type="GeneID" id="26140"/>
<dbReference type="KEGG" id="hsa:26140"/>
<dbReference type="UCSC" id="uc003bti.5">
    <molecule id="Q9Y4R7-1"/>
    <property type="organism name" value="human"/>
</dbReference>
<dbReference type="AGR" id="HGNC:24483"/>
<dbReference type="CTD" id="26140"/>
<dbReference type="DisGeNET" id="26140"/>
<dbReference type="GeneCards" id="TTLL3"/>
<dbReference type="HGNC" id="HGNC:24483">
    <property type="gene designation" value="TTLL3"/>
</dbReference>
<dbReference type="HPA" id="ENSG00000214021">
    <property type="expression patterns" value="Low tissue specificity"/>
</dbReference>
<dbReference type="MIM" id="619195">
    <property type="type" value="gene"/>
</dbReference>
<dbReference type="neXtProt" id="NX_Q9Y4R7"/>
<dbReference type="OpenTargets" id="ENSG00000214021"/>
<dbReference type="PharmGKB" id="PA134942870"/>
<dbReference type="VEuPathDB" id="HostDB:ENSG00000214021"/>
<dbReference type="eggNOG" id="KOG2157">
    <property type="taxonomic scope" value="Eukaryota"/>
</dbReference>
<dbReference type="GeneTree" id="ENSGT00940000154857"/>
<dbReference type="HOGENOM" id="CLU_633064_0_0_1"/>
<dbReference type="InParanoid" id="Q9Y4R7"/>
<dbReference type="OrthoDB" id="202825at2759"/>
<dbReference type="PAN-GO" id="Q9Y4R7">
    <property type="GO annotations" value="5 GO annotations based on evolutionary models"/>
</dbReference>
<dbReference type="PhylomeDB" id="Q9Y4R7"/>
<dbReference type="PathwayCommons" id="Q9Y4R7"/>
<dbReference type="Reactome" id="R-HSA-8955332">
    <property type="pathway name" value="Carboxyterminal post-translational modifications of tubulin"/>
</dbReference>
<dbReference type="SignaLink" id="Q9Y4R7"/>
<dbReference type="BioGRID-ORCS" id="26140">
    <property type="hits" value="12 hits in 1153 CRISPR screens"/>
</dbReference>
<dbReference type="CD-CODE" id="FB4E32DD">
    <property type="entry name" value="Presynaptic clusters and postsynaptic densities"/>
</dbReference>
<dbReference type="ChiTaRS" id="TTLL3">
    <property type="organism name" value="human"/>
</dbReference>
<dbReference type="GeneWiki" id="TTLL3"/>
<dbReference type="GenomeRNAi" id="26140"/>
<dbReference type="Pharos" id="Q9Y4R7">
    <property type="development level" value="Tbio"/>
</dbReference>
<dbReference type="PRO" id="PR:Q9Y4R7"/>
<dbReference type="Proteomes" id="UP000005640">
    <property type="component" value="Chromosome 3"/>
</dbReference>
<dbReference type="RNAct" id="Q9Y4R7">
    <property type="molecule type" value="protein"/>
</dbReference>
<dbReference type="Bgee" id="ENSG00000214021">
    <property type="expression patterns" value="Expressed in right uterine tube and 158 other cell types or tissues"/>
</dbReference>
<dbReference type="ExpressionAtlas" id="Q9Y4R7">
    <property type="expression patterns" value="baseline and differential"/>
</dbReference>
<dbReference type="GO" id="GO:0005930">
    <property type="term" value="C:axoneme"/>
    <property type="evidence" value="ECO:0000250"/>
    <property type="project" value="UniProtKB"/>
</dbReference>
<dbReference type="GO" id="GO:0005929">
    <property type="term" value="C:cilium"/>
    <property type="evidence" value="ECO:0000250"/>
    <property type="project" value="UniProtKB"/>
</dbReference>
<dbReference type="GO" id="GO:0005829">
    <property type="term" value="C:cytosol"/>
    <property type="evidence" value="ECO:0000304"/>
    <property type="project" value="Reactome"/>
</dbReference>
<dbReference type="GO" id="GO:0005874">
    <property type="term" value="C:microtubule"/>
    <property type="evidence" value="ECO:0007669"/>
    <property type="project" value="UniProtKB-KW"/>
</dbReference>
<dbReference type="GO" id="GO:0015630">
    <property type="term" value="C:microtubule cytoskeleton"/>
    <property type="evidence" value="ECO:0000250"/>
    <property type="project" value="UniProtKB"/>
</dbReference>
<dbReference type="GO" id="GO:0036126">
    <property type="term" value="C:sperm flagellum"/>
    <property type="evidence" value="ECO:0000250"/>
    <property type="project" value="UniProtKB"/>
</dbReference>
<dbReference type="GO" id="GO:0005524">
    <property type="term" value="F:ATP binding"/>
    <property type="evidence" value="ECO:0007669"/>
    <property type="project" value="UniProtKB-KW"/>
</dbReference>
<dbReference type="GO" id="GO:0046872">
    <property type="term" value="F:metal ion binding"/>
    <property type="evidence" value="ECO:0007669"/>
    <property type="project" value="UniProtKB-KW"/>
</dbReference>
<dbReference type="GO" id="GO:0070735">
    <property type="term" value="F:protein-glycine ligase activity"/>
    <property type="evidence" value="ECO:0000314"/>
    <property type="project" value="UniProtKB"/>
</dbReference>
<dbReference type="GO" id="GO:0070736">
    <property type="term" value="F:protein-glycine ligase activity, initiating"/>
    <property type="evidence" value="ECO:0000250"/>
    <property type="project" value="UniProtKB"/>
</dbReference>
<dbReference type="GO" id="GO:0035082">
    <property type="term" value="P:axoneme assembly"/>
    <property type="evidence" value="ECO:0000250"/>
    <property type="project" value="UniProtKB"/>
</dbReference>
<dbReference type="GO" id="GO:0060271">
    <property type="term" value="P:cilium assembly"/>
    <property type="evidence" value="ECO:0000250"/>
    <property type="project" value="UniProtKB"/>
</dbReference>
<dbReference type="GO" id="GO:0030317">
    <property type="term" value="P:flagellated sperm motility"/>
    <property type="evidence" value="ECO:0000250"/>
    <property type="project" value="UniProtKB"/>
</dbReference>
<dbReference type="GO" id="GO:0036211">
    <property type="term" value="P:protein modification process"/>
    <property type="evidence" value="ECO:0007669"/>
    <property type="project" value="InterPro"/>
</dbReference>
<dbReference type="GO" id="GO:0007283">
    <property type="term" value="P:spermatogenesis"/>
    <property type="evidence" value="ECO:0000318"/>
    <property type="project" value="GO_Central"/>
</dbReference>
<dbReference type="FunFam" id="3.30.470.20:FF:000032">
    <property type="entry name" value="tubulin monoglycylase TTLL3 isoform X2"/>
    <property type="match status" value="1"/>
</dbReference>
<dbReference type="Gene3D" id="3.30.470.20">
    <property type="entry name" value="ATP-grasp fold, B domain"/>
    <property type="match status" value="1"/>
</dbReference>
<dbReference type="InterPro" id="IPR004344">
    <property type="entry name" value="TTL/TTLL_fam"/>
</dbReference>
<dbReference type="InterPro" id="IPR051437">
    <property type="entry name" value="TTLL_monoglycylase"/>
</dbReference>
<dbReference type="PANTHER" id="PTHR45870">
    <property type="entry name" value="TUBULIN MONOGLYCYLASE TTLL3"/>
    <property type="match status" value="1"/>
</dbReference>
<dbReference type="PANTHER" id="PTHR45870:SF1">
    <property type="entry name" value="TUBULIN MONOGLYCYLASE TTLL3"/>
    <property type="match status" value="1"/>
</dbReference>
<dbReference type="Pfam" id="PF03133">
    <property type="entry name" value="TTL"/>
    <property type="match status" value="1"/>
</dbReference>
<dbReference type="SUPFAM" id="SSF56059">
    <property type="entry name" value="Glutathione synthetase ATP-binding domain-like"/>
    <property type="match status" value="1"/>
</dbReference>
<dbReference type="PROSITE" id="PS51221">
    <property type="entry name" value="TTL"/>
    <property type="match status" value="1"/>
</dbReference>
<organism>
    <name type="scientific">Homo sapiens</name>
    <name type="common">Human</name>
    <dbReference type="NCBI Taxonomy" id="9606"/>
    <lineage>
        <taxon>Eukaryota</taxon>
        <taxon>Metazoa</taxon>
        <taxon>Chordata</taxon>
        <taxon>Craniata</taxon>
        <taxon>Vertebrata</taxon>
        <taxon>Euteleostomi</taxon>
        <taxon>Mammalia</taxon>
        <taxon>Eutheria</taxon>
        <taxon>Euarchontoglires</taxon>
        <taxon>Primates</taxon>
        <taxon>Haplorrhini</taxon>
        <taxon>Catarrhini</taxon>
        <taxon>Hominidae</taxon>
        <taxon>Homo</taxon>
    </lineage>
</organism>
<feature type="chain" id="PRO_0000212441" description="Tubulin monoglycylase TTLL3">
    <location>
        <begin position="1"/>
        <end position="772"/>
    </location>
</feature>
<feature type="domain" description="TTL" evidence="4">
    <location>
        <begin position="151"/>
        <end position="510"/>
    </location>
</feature>
<feature type="region of interest" description="Disordered" evidence="5">
    <location>
        <begin position="50"/>
        <end position="81"/>
    </location>
</feature>
<feature type="compositionally biased region" description="Acidic residues" evidence="5">
    <location>
        <begin position="68"/>
        <end position="81"/>
    </location>
</feature>
<feature type="binding site" evidence="2">
    <location>
        <position position="283"/>
    </location>
    <ligand>
        <name>ATP</name>
        <dbReference type="ChEBI" id="CHEBI:30616"/>
    </ligand>
</feature>
<feature type="binding site" evidence="2">
    <location>
        <begin position="289"/>
        <end position="290"/>
    </location>
    <ligand>
        <name>ATP</name>
        <dbReference type="ChEBI" id="CHEBI:30616"/>
    </ligand>
</feature>
<feature type="binding site" evidence="2">
    <location>
        <position position="289"/>
    </location>
    <ligand>
        <name>a protein</name>
        <dbReference type="ChEBI" id="CHEBI:16541"/>
    </ligand>
    <ligandPart>
        <name>L-glutamate residue</name>
        <dbReference type="ChEBI" id="CHEBI:29973"/>
        <note>L-glutamate acceptor residue in protein target</note>
    </ligandPart>
</feature>
<feature type="binding site" evidence="3">
    <location>
        <begin position="321"/>
        <end position="324"/>
    </location>
    <ligand>
        <name>ATP</name>
        <dbReference type="ChEBI" id="CHEBI:30616"/>
    </ligand>
</feature>
<feature type="binding site" evidence="2">
    <location>
        <begin position="334"/>
        <end position="336"/>
    </location>
    <ligand>
        <name>ATP</name>
        <dbReference type="ChEBI" id="CHEBI:30616"/>
    </ligand>
</feature>
<feature type="binding site" evidence="2">
    <location>
        <begin position="378"/>
        <end position="379"/>
    </location>
    <ligand>
        <name>ATP</name>
        <dbReference type="ChEBI" id="CHEBI:30616"/>
    </ligand>
</feature>
<feature type="binding site" evidence="2">
    <location>
        <position position="381"/>
    </location>
    <ligand>
        <name>L-glutamate</name>
        <dbReference type="ChEBI" id="CHEBI:29985"/>
    </ligand>
</feature>
<feature type="binding site" evidence="2">
    <location>
        <position position="456"/>
    </location>
    <ligand>
        <name>Mg(2+)</name>
        <dbReference type="ChEBI" id="CHEBI:18420"/>
        <label>1</label>
    </ligand>
</feature>
<feature type="binding site" evidence="3">
    <location>
        <position position="469"/>
    </location>
    <ligand>
        <name>ATP</name>
        <dbReference type="ChEBI" id="CHEBI:30616"/>
    </ligand>
</feature>
<feature type="binding site" evidence="2">
    <location>
        <position position="469"/>
    </location>
    <ligand>
        <name>Mg(2+)</name>
        <dbReference type="ChEBI" id="CHEBI:18420"/>
        <label>1</label>
    </ligand>
</feature>
<feature type="binding site" evidence="2">
    <location>
        <position position="469"/>
    </location>
    <ligand>
        <name>Mg(2+)</name>
        <dbReference type="ChEBI" id="CHEBI:18420"/>
        <label>2</label>
    </ligand>
</feature>
<feature type="binding site" evidence="2">
    <location>
        <position position="471"/>
    </location>
    <ligand>
        <name>Mg(2+)</name>
        <dbReference type="ChEBI" id="CHEBI:18420"/>
        <label>2</label>
    </ligand>
</feature>
<feature type="site" description="Essential for specifying initiation versus elongation step of the glycylase activity" evidence="2">
    <location>
        <position position="289"/>
    </location>
</feature>
<feature type="splice variant" id="VSP_032567" description="In isoform 4." evidence="13">
    <location>
        <begin position="1"/>
        <end position="272"/>
    </location>
</feature>
<feature type="splice variant" id="VSP_032568" description="In isoform 2 and isoform 3." evidence="11 12">
    <location>
        <begin position="1"/>
        <end position="212"/>
    </location>
</feature>
<feature type="splice variant" id="VSP_032572" description="In isoform 2 and isoform 4." evidence="11 12 13">
    <original>AVEVPQYVGIRLLVEGFTIKKPMAMCHRRMGVRPAVPLLTQRGSG</original>
    <variation>VTTSPASTPRPSCLLPMYSDTRARSSDDSTASWWALRPCRPQARP</variation>
    <location>
        <begin position="520"/>
        <end position="564"/>
    </location>
</feature>
<feature type="splice variant" id="VSP_032573" description="In isoform 2 and isoform 4." evidence="11 12 13">
    <location>
        <begin position="565"/>
        <end position="772"/>
    </location>
</feature>
<feature type="splice variant" id="VSP_032576" description="In isoform 3." evidence="11 12">
    <original>APALL</original>
    <variation>VGLDL</variation>
    <location>
        <begin position="642"/>
        <end position="646"/>
    </location>
</feature>
<feature type="splice variant" id="VSP_032577" description="In isoform 3." evidence="11 12">
    <location>
        <begin position="647"/>
        <end position="772"/>
    </location>
</feature>
<feature type="sequence variant" id="VAR_052410" description="In dbSNP:rs3806669.">
    <original>E</original>
    <variation>K</variation>
    <location>
        <position position="174"/>
    </location>
</feature>
<feature type="sequence variant" id="VAR_052411" description="In dbSNP:rs2290302.">
    <original>N</original>
    <variation>H</variation>
    <location>
        <position position="418"/>
    </location>
</feature>
<feature type="sequence variant" id="VAR_036054" description="In a colorectal cancer sample; somatic mutation." evidence="8">
    <original>G</original>
    <variation>S</variation>
    <location>
        <position position="454"/>
    </location>
</feature>
<feature type="sequence variant" id="VAR_036055" description="In a colorectal cancer sample; somatic mutation; dbSNP:rs2081317006." evidence="8">
    <original>M</original>
    <variation>I</variation>
    <location>
        <position position="476"/>
    </location>
</feature>
<feature type="sequence variant" id="VAR_020207" description="In dbSNP:rs2290305." evidence="6 7 9">
    <original>M</original>
    <variation>R</variation>
    <location>
        <position position="502"/>
    </location>
</feature>
<feature type="sequence variant" id="VAR_052412" description="In dbSNP:rs1057278.">
    <original>A</original>
    <variation>T</variation>
    <location>
        <position position="689"/>
    </location>
</feature>
<feature type="sequence conflict" description="In Ref. 5; AAF23353." evidence="14" ref="5">
    <original>I</original>
    <variation>F</variation>
    <location>
        <position position="279"/>
    </location>
</feature>
<feature type="sequence conflict" description="In Ref. 1; CAH10554." evidence="14" ref="1">
    <original>R</original>
    <variation>G</variation>
    <location sequence="Q9Y4R7-2">
        <position position="317"/>
    </location>
</feature>
<comment type="function">
    <text evidence="1 3 10">Monoglycylase which modifies alpha- and beta-tubulin, adding a single glycine on the gamma-carboxyl groups of specific glutamate residues to generate monoglycine side chains within the C-terminal tail of tubulin. Not involved in elongation step of the polyglycylation reaction (By similarity). Preferentially glycylates a beta-tail peptide over the alpha-tail, although shifts its preference toward alpha-tail as beta-tail glutamylation increases (By similarity). Competes with polyglutamylases for modification site on beta-tubulin substrate, thereby creating an anticorrelation between glycylation and glutamylation reactions (By similarity). Together with TTLL8, mediates microtubule glycylation of primary and motile cilia, which is essential for their stability and maintenance (By similarity). Involved in microtubule glycylation of primary cilia in colon which controls cell proliferation of epithelial cells and plays an essential role in colon cancer development (PubMed:25180231). Together with TTLL8, glycylates sperm flagella which regulates axonemal dynein motor activity, thereby controlling flagellar beat, directional sperm swimming and male fertility (By similarity).</text>
</comment>
<comment type="catalytic activity">
    <reaction evidence="1">
        <text>L-glutamyl-[protein] + glycine + ATP = glycyl-L-glutamyl-[protein] + ADP + phosphate + H(+)</text>
        <dbReference type="Rhea" id="RHEA:67180"/>
        <dbReference type="Rhea" id="RHEA-COMP:10208"/>
        <dbReference type="Rhea" id="RHEA-COMP:17207"/>
        <dbReference type="ChEBI" id="CHEBI:15378"/>
        <dbReference type="ChEBI" id="CHEBI:29973"/>
        <dbReference type="ChEBI" id="CHEBI:30616"/>
        <dbReference type="ChEBI" id="CHEBI:43474"/>
        <dbReference type="ChEBI" id="CHEBI:57305"/>
        <dbReference type="ChEBI" id="CHEBI:167890"/>
        <dbReference type="ChEBI" id="CHEBI:456216"/>
    </reaction>
    <physiologicalReaction direction="left-to-right" evidence="1">
        <dbReference type="Rhea" id="RHEA:67181"/>
    </physiologicalReaction>
</comment>
<comment type="cofactor">
    <cofactor evidence="2">
        <name>Mg(2+)</name>
        <dbReference type="ChEBI" id="CHEBI:18420"/>
    </cofactor>
</comment>
<comment type="subcellular location">
    <subcellularLocation>
        <location evidence="10">Cytoplasm</location>
        <location evidence="10">Cytoskeleton</location>
    </subcellularLocation>
    <subcellularLocation>
        <location evidence="1">Cell projection</location>
        <location evidence="1">Cilium</location>
    </subcellularLocation>
    <subcellularLocation>
        <location evidence="1">Cytoplasm</location>
        <location evidence="1">Cytoskeleton</location>
        <location evidence="1">Cilium axoneme</location>
    </subcellularLocation>
    <subcellularLocation>
        <location evidence="1">Cytoplasm</location>
        <location evidence="1">Cytoskeleton</location>
        <location evidence="1">Flagellum axoneme</location>
    </subcellularLocation>
</comment>
<comment type="alternative products">
    <event type="alternative splicing"/>
    <isoform>
        <id>Q9Y4R7-1</id>
        <name>1</name>
        <sequence type="displayed"/>
    </isoform>
    <isoform>
        <id>Q9Y4R7-2</id>
        <name>2</name>
        <sequence type="described" ref="VSP_032568 VSP_032572 VSP_032573"/>
    </isoform>
    <isoform>
        <id>Q9Y4R7-5</id>
        <name>3</name>
        <sequence type="described" ref="VSP_032568 VSP_032576 VSP_032577"/>
    </isoform>
    <isoform>
        <id>Q9Y4R7-6</id>
        <name>4</name>
        <sequence type="described" ref="VSP_032567 VSP_032572 VSP_032573"/>
    </isoform>
</comment>
<comment type="tissue specificity">
    <text evidence="10">Expressed in brain, heart, kidney, testis, liver, lung, muscle, spleen, trachea and colon.</text>
</comment>
<comment type="domain">
    <text evidence="3">Two conserved structural elements specific among monoglycylases, IS1 and IS2, are involved in glycyl chains initiation. Two conserved structural interfaces likely constitute the binding platforms for tubulin tail and microtubule.</text>
</comment>
<comment type="domain">
    <text evidence="2">Arg-289 is the main determinant for regioselectivity, which segregates between initiases and elongases in all tubulin--tyrosine ligase family. A glutamine residue at this position is found in elongases TTLL6, TTLL9, TTLL11, TTLL13, TTLL10 and favors glutamate-chain elongation, whereas an arginine residue is found in initiases TTLL2, TTLL4, TTLL5, TTLL3, TTLL8 and favors initiation.</text>
</comment>
<comment type="caution">
    <text evidence="1">TTLL3 and TTLL8 monoglycylase-mediated glycylation of tubulin was initially reported to play a role in ependymal motile ciliary maintenance (By similarity). However, contradictory results were later observed (By similarity).</text>
</comment>
<reference key="1">
    <citation type="journal article" date="2007" name="BMC Genomics">
        <title>The full-ORF clone resource of the German cDNA consortium.</title>
        <authorList>
            <person name="Bechtel S."/>
            <person name="Rosenfelder H."/>
            <person name="Duda A."/>
            <person name="Schmidt C.P."/>
            <person name="Ernst U."/>
            <person name="Wellenreuther R."/>
            <person name="Mehrle A."/>
            <person name="Schuster C."/>
            <person name="Bahr A."/>
            <person name="Bloecker H."/>
            <person name="Heubner D."/>
            <person name="Hoerlein A."/>
            <person name="Michel G."/>
            <person name="Wedler H."/>
            <person name="Koehrer K."/>
            <person name="Ottenwaelder B."/>
            <person name="Poustka A."/>
            <person name="Wiemann S."/>
            <person name="Schupp I."/>
        </authorList>
    </citation>
    <scope>NUCLEOTIDE SEQUENCE [LARGE SCALE MRNA] (ISOFORMS 2 AND 3)</scope>
    <scope>VARIANT ARG-502</scope>
    <source>
        <tissue>Cervix</tissue>
        <tissue>Testis</tissue>
        <tissue>Uterus</tissue>
    </source>
</reference>
<reference key="2">
    <citation type="journal article" date="2006" name="Nature">
        <title>The DNA sequence, annotation and analysis of human chromosome 3.</title>
        <authorList>
            <person name="Muzny D.M."/>
            <person name="Scherer S.E."/>
            <person name="Kaul R."/>
            <person name="Wang J."/>
            <person name="Yu J."/>
            <person name="Sudbrak R."/>
            <person name="Buhay C.J."/>
            <person name="Chen R."/>
            <person name="Cree A."/>
            <person name="Ding Y."/>
            <person name="Dugan-Rocha S."/>
            <person name="Gill R."/>
            <person name="Gunaratne P."/>
            <person name="Harris R.A."/>
            <person name="Hawes A.C."/>
            <person name="Hernandez J."/>
            <person name="Hodgson A.V."/>
            <person name="Hume J."/>
            <person name="Jackson A."/>
            <person name="Khan Z.M."/>
            <person name="Kovar-Smith C."/>
            <person name="Lewis L.R."/>
            <person name="Lozado R.J."/>
            <person name="Metzker M.L."/>
            <person name="Milosavljevic A."/>
            <person name="Miner G.R."/>
            <person name="Morgan M.B."/>
            <person name="Nazareth L.V."/>
            <person name="Scott G."/>
            <person name="Sodergren E."/>
            <person name="Song X.-Z."/>
            <person name="Steffen D."/>
            <person name="Wei S."/>
            <person name="Wheeler D.A."/>
            <person name="Wright M.W."/>
            <person name="Worley K.C."/>
            <person name="Yuan Y."/>
            <person name="Zhang Z."/>
            <person name="Adams C.Q."/>
            <person name="Ansari-Lari M.A."/>
            <person name="Ayele M."/>
            <person name="Brown M.J."/>
            <person name="Chen G."/>
            <person name="Chen Z."/>
            <person name="Clendenning J."/>
            <person name="Clerc-Blankenburg K.P."/>
            <person name="Chen R."/>
            <person name="Chen Z."/>
            <person name="Davis C."/>
            <person name="Delgado O."/>
            <person name="Dinh H.H."/>
            <person name="Dong W."/>
            <person name="Draper H."/>
            <person name="Ernst S."/>
            <person name="Fu G."/>
            <person name="Gonzalez-Garay M.L."/>
            <person name="Garcia D.K."/>
            <person name="Gillett W."/>
            <person name="Gu J."/>
            <person name="Hao B."/>
            <person name="Haugen E."/>
            <person name="Havlak P."/>
            <person name="He X."/>
            <person name="Hennig S."/>
            <person name="Hu S."/>
            <person name="Huang W."/>
            <person name="Jackson L.R."/>
            <person name="Jacob L.S."/>
            <person name="Kelly S.H."/>
            <person name="Kube M."/>
            <person name="Levy R."/>
            <person name="Li Z."/>
            <person name="Liu B."/>
            <person name="Liu J."/>
            <person name="Liu W."/>
            <person name="Lu J."/>
            <person name="Maheshwari M."/>
            <person name="Nguyen B.-V."/>
            <person name="Okwuonu G.O."/>
            <person name="Palmeiri A."/>
            <person name="Pasternak S."/>
            <person name="Perez L.M."/>
            <person name="Phelps K.A."/>
            <person name="Plopper F.J."/>
            <person name="Qiang B."/>
            <person name="Raymond C."/>
            <person name="Rodriguez R."/>
            <person name="Saenphimmachak C."/>
            <person name="Santibanez J."/>
            <person name="Shen H."/>
            <person name="Shen Y."/>
            <person name="Subramanian S."/>
            <person name="Tabor P.E."/>
            <person name="Verduzco D."/>
            <person name="Waldron L."/>
            <person name="Wang J."/>
            <person name="Wang J."/>
            <person name="Wang Q."/>
            <person name="Williams G.A."/>
            <person name="Wong G.K.-S."/>
            <person name="Yao Z."/>
            <person name="Zhang J."/>
            <person name="Zhang X."/>
            <person name="Zhao G."/>
            <person name="Zhou J."/>
            <person name="Zhou Y."/>
            <person name="Nelson D."/>
            <person name="Lehrach H."/>
            <person name="Reinhardt R."/>
            <person name="Naylor S.L."/>
            <person name="Yang H."/>
            <person name="Olson M."/>
            <person name="Weinstock G."/>
            <person name="Gibbs R.A."/>
        </authorList>
    </citation>
    <scope>NUCLEOTIDE SEQUENCE [LARGE SCALE GENOMIC DNA]</scope>
</reference>
<reference key="3">
    <citation type="journal article" date="2004" name="Genome Res.">
        <title>The status, quality, and expansion of the NIH full-length cDNA project: the Mammalian Gene Collection (MGC).</title>
        <authorList>
            <consortium name="The MGC Project Team"/>
        </authorList>
    </citation>
    <scope>NUCLEOTIDE SEQUENCE [LARGE SCALE MRNA] (ISOFORMS 2 AND 3)</scope>
    <scope>VARIANT ARG-502</scope>
</reference>
<reference key="4">
    <citation type="journal article" date="2004" name="Nat. Genet.">
        <title>Complete sequencing and characterization of 21,243 full-length human cDNAs.</title>
        <authorList>
            <person name="Ota T."/>
            <person name="Suzuki Y."/>
            <person name="Nishikawa T."/>
            <person name="Otsuki T."/>
            <person name="Sugiyama T."/>
            <person name="Irie R."/>
            <person name="Wakamatsu A."/>
            <person name="Hayashi K."/>
            <person name="Sato H."/>
            <person name="Nagai K."/>
            <person name="Kimura K."/>
            <person name="Makita H."/>
            <person name="Sekine M."/>
            <person name="Obayashi M."/>
            <person name="Nishi T."/>
            <person name="Shibahara T."/>
            <person name="Tanaka T."/>
            <person name="Ishii S."/>
            <person name="Yamamoto J."/>
            <person name="Saito K."/>
            <person name="Kawai Y."/>
            <person name="Isono Y."/>
            <person name="Nakamura Y."/>
            <person name="Nagahari K."/>
            <person name="Murakami K."/>
            <person name="Yasuda T."/>
            <person name="Iwayanagi T."/>
            <person name="Wagatsuma M."/>
            <person name="Shiratori A."/>
            <person name="Sudo H."/>
            <person name="Hosoiri T."/>
            <person name="Kaku Y."/>
            <person name="Kodaira H."/>
            <person name="Kondo H."/>
            <person name="Sugawara M."/>
            <person name="Takahashi M."/>
            <person name="Kanda K."/>
            <person name="Yokoi T."/>
            <person name="Furuya T."/>
            <person name="Kikkawa E."/>
            <person name="Omura Y."/>
            <person name="Abe K."/>
            <person name="Kamihara K."/>
            <person name="Katsuta N."/>
            <person name="Sato K."/>
            <person name="Tanikawa M."/>
            <person name="Yamazaki M."/>
            <person name="Ninomiya K."/>
            <person name="Ishibashi T."/>
            <person name="Yamashita H."/>
            <person name="Murakawa K."/>
            <person name="Fujimori K."/>
            <person name="Tanai H."/>
            <person name="Kimata M."/>
            <person name="Watanabe M."/>
            <person name="Hiraoka S."/>
            <person name="Chiba Y."/>
            <person name="Ishida S."/>
            <person name="Ono Y."/>
            <person name="Takiguchi S."/>
            <person name="Watanabe S."/>
            <person name="Yosida M."/>
            <person name="Hotuta T."/>
            <person name="Kusano J."/>
            <person name="Kanehori K."/>
            <person name="Takahashi-Fujii A."/>
            <person name="Hara H."/>
            <person name="Tanase T.-O."/>
            <person name="Nomura Y."/>
            <person name="Togiya S."/>
            <person name="Komai F."/>
            <person name="Hara R."/>
            <person name="Takeuchi K."/>
            <person name="Arita M."/>
            <person name="Imose N."/>
            <person name="Musashino K."/>
            <person name="Yuuki H."/>
            <person name="Oshima A."/>
            <person name="Sasaki N."/>
            <person name="Aotsuka S."/>
            <person name="Yoshikawa Y."/>
            <person name="Matsunawa H."/>
            <person name="Ichihara T."/>
            <person name="Shiohata N."/>
            <person name="Sano S."/>
            <person name="Moriya S."/>
            <person name="Momiyama H."/>
            <person name="Satoh N."/>
            <person name="Takami S."/>
            <person name="Terashima Y."/>
            <person name="Suzuki O."/>
            <person name="Nakagawa S."/>
            <person name="Senoh A."/>
            <person name="Mizoguchi H."/>
            <person name="Goto Y."/>
            <person name="Shimizu F."/>
            <person name="Wakebe H."/>
            <person name="Hishigaki H."/>
            <person name="Watanabe T."/>
            <person name="Sugiyama A."/>
            <person name="Takemoto M."/>
            <person name="Kawakami B."/>
            <person name="Yamazaki M."/>
            <person name="Watanabe K."/>
            <person name="Kumagai A."/>
            <person name="Itakura S."/>
            <person name="Fukuzumi Y."/>
            <person name="Fujimori Y."/>
            <person name="Komiyama M."/>
            <person name="Tashiro H."/>
            <person name="Tanigami A."/>
            <person name="Fujiwara T."/>
            <person name="Ono T."/>
            <person name="Yamada K."/>
            <person name="Fujii Y."/>
            <person name="Ozaki K."/>
            <person name="Hirao M."/>
            <person name="Ohmori Y."/>
            <person name="Kawabata A."/>
            <person name="Hikiji T."/>
            <person name="Kobatake N."/>
            <person name="Inagaki H."/>
            <person name="Ikema Y."/>
            <person name="Okamoto S."/>
            <person name="Okitani R."/>
            <person name="Kawakami T."/>
            <person name="Noguchi S."/>
            <person name="Itoh T."/>
            <person name="Shigeta K."/>
            <person name="Senba T."/>
            <person name="Matsumura K."/>
            <person name="Nakajima Y."/>
            <person name="Mizuno T."/>
            <person name="Morinaga M."/>
            <person name="Sasaki M."/>
            <person name="Togashi T."/>
            <person name="Oyama M."/>
            <person name="Hata H."/>
            <person name="Watanabe M."/>
            <person name="Komatsu T."/>
            <person name="Mizushima-Sugano J."/>
            <person name="Satoh T."/>
            <person name="Shirai Y."/>
            <person name="Takahashi Y."/>
            <person name="Nakagawa K."/>
            <person name="Okumura K."/>
            <person name="Nagase T."/>
            <person name="Nomura N."/>
            <person name="Kikuchi H."/>
            <person name="Masuho Y."/>
            <person name="Yamashita R."/>
            <person name="Nakai K."/>
            <person name="Yada T."/>
            <person name="Nakamura Y."/>
            <person name="Ohara O."/>
            <person name="Isogai T."/>
            <person name="Sugano S."/>
        </authorList>
    </citation>
    <scope>NUCLEOTIDE SEQUENCE [LARGE SCALE MRNA] OF 1-744 (ISOFORM 1)</scope>
    <scope>VARIANT ARG-502</scope>
    <source>
        <tissue>Thyroid</tissue>
    </source>
</reference>
<reference key="5">
    <citation type="submission" date="1998-07" db="EMBL/GenBank/DDBJ databases">
        <title>Functional prediction of the coding sequences of 50 new genes deduced by analysis of cDNA clones from human fetal liver.</title>
        <authorList>
            <person name="Yu Y."/>
            <person name="Zhang C."/>
            <person name="Luo L."/>
            <person name="Ouyang S."/>
            <person name="Zhang S."/>
            <person name="Li W."/>
            <person name="Wu J."/>
            <person name="Zhou S."/>
            <person name="Liu M."/>
            <person name="He F."/>
        </authorList>
    </citation>
    <scope>NUCLEOTIDE SEQUENCE [LARGE SCALE MRNA] (ISOFORM 4)</scope>
    <source>
        <tissue>Fetal liver</tissue>
    </source>
</reference>
<reference key="6">
    <citation type="journal article" date="2014" name="EMBO J.">
        <title>Tubulin glycylases are required for primary cilia, control of cell proliferation and tumor development in colon.</title>
        <authorList>
            <person name="Rocha C."/>
            <person name="Papon L."/>
            <person name="Cacheux W."/>
            <person name="Marques Sousa P."/>
            <person name="Lascano V."/>
            <person name="Tort O."/>
            <person name="Giordano T."/>
            <person name="Vacher S."/>
            <person name="Lemmers B."/>
            <person name="Mariani P."/>
            <person name="Meseure D."/>
            <person name="Medema J.P."/>
            <person name="Bieche I."/>
            <person name="Hahne M."/>
            <person name="Janke C."/>
        </authorList>
    </citation>
    <scope>FUNCTION</scope>
    <scope>SUBCELLULAR LOCATION</scope>
    <scope>TISSUE SPECIFICITY</scope>
</reference>
<reference key="7">
    <citation type="journal article" date="2006" name="Science">
        <title>The consensus coding sequences of human breast and colorectal cancers.</title>
        <authorList>
            <person name="Sjoeblom T."/>
            <person name="Jones S."/>
            <person name="Wood L.D."/>
            <person name="Parsons D.W."/>
            <person name="Lin J."/>
            <person name="Barber T.D."/>
            <person name="Mandelker D."/>
            <person name="Leary R.J."/>
            <person name="Ptak J."/>
            <person name="Silliman N."/>
            <person name="Szabo S."/>
            <person name="Buckhaults P."/>
            <person name="Farrell C."/>
            <person name="Meeh P."/>
            <person name="Markowitz S.D."/>
            <person name="Willis J."/>
            <person name="Dawson D."/>
            <person name="Willson J.K.V."/>
            <person name="Gazdar A.F."/>
            <person name="Hartigan J."/>
            <person name="Wu L."/>
            <person name="Liu C."/>
            <person name="Parmigiani G."/>
            <person name="Park B.H."/>
            <person name="Bachman K.E."/>
            <person name="Papadopoulos N."/>
            <person name="Vogelstein B."/>
            <person name="Kinzler K.W."/>
            <person name="Velculescu V.E."/>
        </authorList>
    </citation>
    <scope>VARIANTS [LARGE SCALE ANALYSIS] SER-454 AND ILE-476</scope>
</reference>
<gene>
    <name evidence="15" type="primary">TTLL3</name>
    <name type="ORF">PRO0207</name>
</gene>
<sequence>MNRLRNAKIYVERAVKQKKIFTIQGCYPVIRCLLRRRGWVEKKMVHRSGPTLLPPQKDLDSSAMGDSDTTEDEDEDEDEEFQPSQLFDFDDLLKFDDLDGTHALMVGLCLNLRNLPWFDEVDANSFFPRCYCLGAEDDKKAFIEDFWLTAARNVLKLVVKSEWKSYPIQAVEEEASGDKQPKKQEKNPVLVSPEFVDEALCACEEYLSNLAHMDIDKDLEAPLYLTPEGWSLFLQRYYQVVHEGAELRHLDTQVQRCEDILQQLQAVVPQIDMEGDRNIWIVKPGAKSRGRGIMCMDHLEEMLKLVNGNPVVMKDGKWVVQKYIERPLLIFGTKFDLRQWFLVTDWNPLTVWFYRDSYIRFSTQPFSLKNLDNSVHLCNNSIQKHLENSCHRHPLLPPDNMWSSQRFQAHLQEMGAPNAWSTIIVPGMKDAVIHALQTSQDTVQCRKASFELYGADFVFGEDFQPWLIEINASPTMAPSTAVTARLCAGVQADTLRVVIDRMLDRNCDTGAFELIYKQPAVEVPQYVGIRLLVEGFTIKKPMAMCHRRMGVRPAVPLLTQRGSGEARHHFPSLHTKAQLPSPHVLRHQGQVLRRQHSKLVGTKALSTTGKALRTLPTAKVFISLPPNLDFKVAPSILKPRKAPALLCLRGPQLEVPCCLCPLKSEQFLAPVGRSRPKANSRPDCDKPRAEACPMKRLSPLKPLPLVGTFQRRRGLGDMKLGKPLLRFPTALVLDPTPNKKKQVKYLGLDSIAVGGSRVDGARPCTPGSTARA</sequence>